<name>POLS2_HUMAN</name>
<protein>
    <recommendedName>
        <fullName>Polyserase-2</fullName>
        <ecNumber>3.4.21.-</ecNumber>
    </recommendedName>
    <alternativeName>
        <fullName>Polyserine protease 2</fullName>
    </alternativeName>
    <alternativeName>
        <fullName>Serine protease 36</fullName>
    </alternativeName>
</protein>
<proteinExistence type="evidence at protein level"/>
<feature type="signal peptide" evidence="2">
    <location>
        <begin position="1"/>
        <end position="22"/>
    </location>
</feature>
<feature type="propeptide" id="PRO_0000027879" evidence="2">
    <location>
        <begin position="23"/>
        <end position="46"/>
    </location>
</feature>
<feature type="chain" id="PRO_0000027880" description="Polyserase-2">
    <location>
        <begin position="47"/>
        <end position="855"/>
    </location>
</feature>
<feature type="domain" description="Peptidase S1 1" evidence="3">
    <location>
        <begin position="47"/>
        <end position="291"/>
    </location>
</feature>
<feature type="domain" description="Peptidase S1 2" evidence="3">
    <location>
        <begin position="323"/>
        <end position="555"/>
    </location>
</feature>
<feature type="domain" description="Peptidase S1 3" evidence="3">
    <location>
        <begin position="590"/>
        <end position="808"/>
    </location>
</feature>
<feature type="region of interest" description="Disordered" evidence="4">
    <location>
        <begin position="292"/>
        <end position="316"/>
    </location>
</feature>
<feature type="compositionally biased region" description="Polar residues" evidence="4">
    <location>
        <begin position="301"/>
        <end position="310"/>
    </location>
</feature>
<feature type="active site" description="Charge relay system" evidence="1">
    <location>
        <position position="87"/>
    </location>
</feature>
<feature type="active site" description="Charge relay system" evidence="1">
    <location>
        <position position="139"/>
    </location>
</feature>
<feature type="active site" description="Charge relay system" evidence="1">
    <location>
        <position position="243"/>
    </location>
</feature>
<feature type="glycosylation site" description="N-linked (GlcNAc...) asparagine" evidence="2">
    <location>
        <position position="92"/>
    </location>
</feature>
<feature type="glycosylation site" description="N-linked (GlcNAc...) asparagine" evidence="2">
    <location>
        <position position="130"/>
    </location>
</feature>
<feature type="glycosylation site" description="N-linked (GlcNAc...) asparagine" evidence="2">
    <location>
        <position position="217"/>
    </location>
</feature>
<feature type="glycosylation site" description="N-linked (GlcNAc...) asparagine" evidence="2">
    <location>
        <position position="317"/>
    </location>
</feature>
<feature type="glycosylation site" description="N-linked (GlcNAc...) asparagine" evidence="2">
    <location>
        <position position="369"/>
    </location>
</feature>
<feature type="glycosylation site" description="N-linked (GlcNAc...) asparagine" evidence="2">
    <location>
        <position position="402"/>
    </location>
</feature>
<feature type="glycosylation site" description="N-linked (GlcNAc...) asparagine" evidence="2">
    <location>
        <position position="407"/>
    </location>
</feature>
<feature type="glycosylation site" description="N-linked (GlcNAc...) asparagine" evidence="2">
    <location>
        <position position="421"/>
    </location>
</feature>
<feature type="glycosylation site" description="N-linked (GlcNAc...) asparagine" evidence="2">
    <location>
        <position position="508"/>
    </location>
</feature>
<feature type="disulfide bond" evidence="3">
    <location>
        <begin position="72"/>
        <end position="88"/>
    </location>
</feature>
<feature type="disulfide bond" evidence="3">
    <location>
        <begin position="173"/>
        <end position="249"/>
    </location>
</feature>
<feature type="disulfide bond" evidence="3">
    <location>
        <begin position="206"/>
        <end position="228"/>
    </location>
</feature>
<feature type="disulfide bond" evidence="3">
    <location>
        <begin position="239"/>
        <end position="267"/>
    </location>
</feature>
<feature type="disulfide bond" evidence="3">
    <location>
        <begin position="348"/>
        <end position="364"/>
    </location>
</feature>
<feature type="disulfide bond" evidence="3">
    <location>
        <begin position="444"/>
        <end position="516"/>
    </location>
</feature>
<feature type="disulfide bond" evidence="3">
    <location>
        <begin position="506"/>
        <end position="534"/>
    </location>
</feature>
<feature type="disulfide bond" evidence="3">
    <location>
        <begin position="615"/>
        <end position="631"/>
    </location>
</feature>
<feature type="disulfide bond" evidence="3">
    <location>
        <begin position="711"/>
        <end position="772"/>
    </location>
</feature>
<feature type="disulfide bond" evidence="3">
    <location>
        <begin position="739"/>
        <end position="751"/>
    </location>
</feature>
<feature type="splice variant" id="VSP_046639" description="In isoform 3." evidence="7">
    <location>
        <begin position="503"/>
        <end position="507"/>
    </location>
</feature>
<feature type="splice variant" id="VSP_044718" description="In isoform 2." evidence="6">
    <location>
        <begin position="661"/>
        <end position="763"/>
    </location>
</feature>
<feature type="sequence conflict" description="In Ref. 2; BAG62942." evidence="8" ref="2">
    <original>E</original>
    <variation>K</variation>
    <location>
        <position position="135"/>
    </location>
</feature>
<feature type="sequence conflict" description="In Ref. 1; CAF25303." evidence="8" ref="1">
    <original>F</original>
    <variation>L</variation>
    <location>
        <position position="812"/>
    </location>
</feature>
<accession>Q5K4E3</accession>
<accession>A8K2P5</accession>
<accession>B4DW80</accession>
<accession>B7ZMK8</accession>
<accession>E7EX56</accession>
<accession>Q8NBY4</accession>
<sequence length="855" mass="91955">MARHLLLPLVMLVISPIPGAFQDSALSPTQEEPEDLDCGRPEPSARIVGGSNAQPGTWPWQVSLHHGGGHICGGSLIAPSWVLSAAHCFMTNGTLEPAAEWSVLLGVHSQDGPLDGAHTRAVAAIVVPANYSQVELGADLALLRLASPASLGPAVWPVCLPRASHRFVHGTACWATGWGDVQEADPLPLPWVLQEVELRLLGEATCQCLYSQPGPFNLTLQILPGMLCAGYPEGRRDTCQGDSGGPLVCEEGGRWFQAGITSFGFGCGRRNRPGVFTAVATYEAWIREQVMGSEPGPAFPTQPQKTQSDPQEPREENCTIALPECGKAPRPGAWPWEAQVMVPGSRPCHGALVSESWVLAPASCFLDPNSSDSPPRDLDAWRVLLPSRPRAERVARLVQHENASWDNASDLALLQLRTPVNLSAASRPVCLPHPEHYFLPGSRCRLARWGRGEPALGPGALLEAELLGGWWCHCLYGRQGAAVPLPGDPPHALCPAYQEKEEVGSCWNDSRWSLLCQEEGTWFLAGIRDFPSGCLRPRAFFPLQTHGPWISHVTRGAYLEDQLAWDWGPDGEETETQTCPPHTEHGACGLRLEAAPVGVLWPWLAEVHVAGDRVCTGILLAPGWVLAATHCVLRPGSTTVPYIEVYLGRAGASSLPQGHQVSRLVISIRLPQHLGLRPPLALLELSSRVEPSPSALPICLHPAGIPPGASCWVLGWKEPQDRVPVAAAVSILTQRICDCLYQGILPPGTLCVLYAEGQENRCEMTSAPPLLCQMTEGSWILVGMAVQGSRELFAAIGPEEAWISQTVGEANFLPPSGSPHWPTGGSNLCPPELAKASGSPHAVYFLLLLTLLIQS</sequence>
<organism>
    <name type="scientific">Homo sapiens</name>
    <name type="common">Human</name>
    <dbReference type="NCBI Taxonomy" id="9606"/>
    <lineage>
        <taxon>Eukaryota</taxon>
        <taxon>Metazoa</taxon>
        <taxon>Chordata</taxon>
        <taxon>Craniata</taxon>
        <taxon>Vertebrata</taxon>
        <taxon>Euteleostomi</taxon>
        <taxon>Mammalia</taxon>
        <taxon>Eutheria</taxon>
        <taxon>Euarchontoglires</taxon>
        <taxon>Primates</taxon>
        <taxon>Haplorrhini</taxon>
        <taxon>Catarrhini</taxon>
        <taxon>Hominidae</taxon>
        <taxon>Homo</taxon>
    </lineage>
</organism>
<evidence type="ECO:0000250" key="1"/>
<evidence type="ECO:0000255" key="2"/>
<evidence type="ECO:0000255" key="3">
    <source>
        <dbReference type="PROSITE-ProRule" id="PRU00274"/>
    </source>
</evidence>
<evidence type="ECO:0000256" key="4">
    <source>
        <dbReference type="SAM" id="MobiDB-lite"/>
    </source>
</evidence>
<evidence type="ECO:0000269" key="5">
    <source>
    </source>
</evidence>
<evidence type="ECO:0000303" key="6">
    <source>
    </source>
</evidence>
<evidence type="ECO:0000303" key="7">
    <source>
    </source>
</evidence>
<evidence type="ECO:0000305" key="8"/>
<gene>
    <name type="primary">PRSS36</name>
</gene>
<comment type="function">
    <text>Serine protease. Hydrolyzes the peptides N-t-Boc-Gln-Ala-Arg-AMC and N-t-Boc-Gln-Gly-Arg-AMC and, to a lesser extent, N-t-Boc-Ala-Phe-Lys-AMC and N-t-Boc-Val-Leu-Lys-AMC. Has a preference for substrates with an Arg instead of a Lys residue in position P1.</text>
</comment>
<comment type="activity regulation">
    <text evidence="5">Inhibited by serine proteinase inhibitor 4-(2-aminoethyl)-benzenesulfonyl fluoride, but not with EDTA or E-64.</text>
</comment>
<comment type="subcellular location">
    <subcellularLocation>
        <location evidence="5">Secreted</location>
        <location evidence="5">Extracellular space</location>
        <location evidence="5">Extracellular matrix</location>
    </subcellularLocation>
    <text>Not attached to membranes.</text>
</comment>
<comment type="alternative products">
    <event type="alternative splicing"/>
    <isoform>
        <id>Q5K4E3-1</id>
        <name>1</name>
        <sequence type="displayed"/>
    </isoform>
    <isoform>
        <id>Q5K4E3-2</id>
        <name>2</name>
        <sequence type="described" ref="VSP_044718"/>
    </isoform>
    <isoform>
        <id>Q5K4E3-3</id>
        <name>3</name>
        <sequence type="described" ref="VSP_046639"/>
    </isoform>
</comment>
<comment type="tissue specificity">
    <text evidence="5">Expressed in fetal kidney, skeletal muscle, liver, placenta and heart. Also expressed in tumor cell lines derived from lung and colon adenocarcinomas.</text>
</comment>
<comment type="domain">
    <text evidence="1">The first serine protease domain is catalytically active, whereas the second domain lacks the essential His residue of the catalytic triad at position 363, and the third domain lacks the essential Asp residue of the catalytic triad at position 679. The second and third domains are therefore predicted to be inactive (By similarity).</text>
</comment>
<comment type="PTM">
    <text>The 3 protease domains are not proteolytically cleaved.</text>
</comment>
<comment type="PTM">
    <text evidence="5">N-glycosylated.</text>
</comment>
<comment type="similarity">
    <text evidence="3">Belongs to the peptidase S1 family.</text>
</comment>
<keyword id="KW-0025">Alternative splicing</keyword>
<keyword id="KW-1015">Disulfide bond</keyword>
<keyword id="KW-0272">Extracellular matrix</keyword>
<keyword id="KW-0325">Glycoprotein</keyword>
<keyword id="KW-0378">Hydrolase</keyword>
<keyword id="KW-0645">Protease</keyword>
<keyword id="KW-1267">Proteomics identification</keyword>
<keyword id="KW-1185">Reference proteome</keyword>
<keyword id="KW-0677">Repeat</keyword>
<keyword id="KW-0964">Secreted</keyword>
<keyword id="KW-0720">Serine protease</keyword>
<keyword id="KW-0732">Signal</keyword>
<keyword id="KW-0865">Zymogen</keyword>
<reference key="1">
    <citation type="journal article" date="2005" name="J. Biol. Chem.">
        <title>Human polyserase-2, a novel enzyme with three tandem serine protease domains in a single polypeptide chain.</title>
        <authorList>
            <person name="Cal S."/>
            <person name="Quesada V."/>
            <person name="Llamazares M."/>
            <person name="Diaz-Perales A."/>
            <person name="Garabaya C."/>
            <person name="Lopez-Otin C."/>
        </authorList>
    </citation>
    <scope>NUCLEOTIDE SEQUENCE [MRNA] (ISOFORM 1)</scope>
    <scope>ENZYME ACTIVITY</scope>
    <scope>ACTIVITY REGULATION</scope>
    <scope>SUBCELLULAR LOCATION</scope>
    <scope>TISSUE SPECIFICITY</scope>
    <scope>GLYCOSYLATION</scope>
    <source>
        <tissue>Liver</tissue>
    </source>
</reference>
<reference key="2">
    <citation type="journal article" date="2004" name="Nat. Genet.">
        <title>Complete sequencing and characterization of 21,243 full-length human cDNAs.</title>
        <authorList>
            <person name="Ota T."/>
            <person name="Suzuki Y."/>
            <person name="Nishikawa T."/>
            <person name="Otsuki T."/>
            <person name="Sugiyama T."/>
            <person name="Irie R."/>
            <person name="Wakamatsu A."/>
            <person name="Hayashi K."/>
            <person name="Sato H."/>
            <person name="Nagai K."/>
            <person name="Kimura K."/>
            <person name="Makita H."/>
            <person name="Sekine M."/>
            <person name="Obayashi M."/>
            <person name="Nishi T."/>
            <person name="Shibahara T."/>
            <person name="Tanaka T."/>
            <person name="Ishii S."/>
            <person name="Yamamoto J."/>
            <person name="Saito K."/>
            <person name="Kawai Y."/>
            <person name="Isono Y."/>
            <person name="Nakamura Y."/>
            <person name="Nagahari K."/>
            <person name="Murakami K."/>
            <person name="Yasuda T."/>
            <person name="Iwayanagi T."/>
            <person name="Wagatsuma M."/>
            <person name="Shiratori A."/>
            <person name="Sudo H."/>
            <person name="Hosoiri T."/>
            <person name="Kaku Y."/>
            <person name="Kodaira H."/>
            <person name="Kondo H."/>
            <person name="Sugawara M."/>
            <person name="Takahashi M."/>
            <person name="Kanda K."/>
            <person name="Yokoi T."/>
            <person name="Furuya T."/>
            <person name="Kikkawa E."/>
            <person name="Omura Y."/>
            <person name="Abe K."/>
            <person name="Kamihara K."/>
            <person name="Katsuta N."/>
            <person name="Sato K."/>
            <person name="Tanikawa M."/>
            <person name="Yamazaki M."/>
            <person name="Ninomiya K."/>
            <person name="Ishibashi T."/>
            <person name="Yamashita H."/>
            <person name="Murakawa K."/>
            <person name="Fujimori K."/>
            <person name="Tanai H."/>
            <person name="Kimata M."/>
            <person name="Watanabe M."/>
            <person name="Hiraoka S."/>
            <person name="Chiba Y."/>
            <person name="Ishida S."/>
            <person name="Ono Y."/>
            <person name="Takiguchi S."/>
            <person name="Watanabe S."/>
            <person name="Yosida M."/>
            <person name="Hotuta T."/>
            <person name="Kusano J."/>
            <person name="Kanehori K."/>
            <person name="Takahashi-Fujii A."/>
            <person name="Hara H."/>
            <person name="Tanase T.-O."/>
            <person name="Nomura Y."/>
            <person name="Togiya S."/>
            <person name="Komai F."/>
            <person name="Hara R."/>
            <person name="Takeuchi K."/>
            <person name="Arita M."/>
            <person name="Imose N."/>
            <person name="Musashino K."/>
            <person name="Yuuki H."/>
            <person name="Oshima A."/>
            <person name="Sasaki N."/>
            <person name="Aotsuka S."/>
            <person name="Yoshikawa Y."/>
            <person name="Matsunawa H."/>
            <person name="Ichihara T."/>
            <person name="Shiohata N."/>
            <person name="Sano S."/>
            <person name="Moriya S."/>
            <person name="Momiyama H."/>
            <person name="Satoh N."/>
            <person name="Takami S."/>
            <person name="Terashima Y."/>
            <person name="Suzuki O."/>
            <person name="Nakagawa S."/>
            <person name="Senoh A."/>
            <person name="Mizoguchi H."/>
            <person name="Goto Y."/>
            <person name="Shimizu F."/>
            <person name="Wakebe H."/>
            <person name="Hishigaki H."/>
            <person name="Watanabe T."/>
            <person name="Sugiyama A."/>
            <person name="Takemoto M."/>
            <person name="Kawakami B."/>
            <person name="Yamazaki M."/>
            <person name="Watanabe K."/>
            <person name="Kumagai A."/>
            <person name="Itakura S."/>
            <person name="Fukuzumi Y."/>
            <person name="Fujimori Y."/>
            <person name="Komiyama M."/>
            <person name="Tashiro H."/>
            <person name="Tanigami A."/>
            <person name="Fujiwara T."/>
            <person name="Ono T."/>
            <person name="Yamada K."/>
            <person name="Fujii Y."/>
            <person name="Ozaki K."/>
            <person name="Hirao M."/>
            <person name="Ohmori Y."/>
            <person name="Kawabata A."/>
            <person name="Hikiji T."/>
            <person name="Kobatake N."/>
            <person name="Inagaki H."/>
            <person name="Ikema Y."/>
            <person name="Okamoto S."/>
            <person name="Okitani R."/>
            <person name="Kawakami T."/>
            <person name="Noguchi S."/>
            <person name="Itoh T."/>
            <person name="Shigeta K."/>
            <person name="Senba T."/>
            <person name="Matsumura K."/>
            <person name="Nakajima Y."/>
            <person name="Mizuno T."/>
            <person name="Morinaga M."/>
            <person name="Sasaki M."/>
            <person name="Togashi T."/>
            <person name="Oyama M."/>
            <person name="Hata H."/>
            <person name="Watanabe M."/>
            <person name="Komatsu T."/>
            <person name="Mizushima-Sugano J."/>
            <person name="Satoh T."/>
            <person name="Shirai Y."/>
            <person name="Takahashi Y."/>
            <person name="Nakagawa K."/>
            <person name="Okumura K."/>
            <person name="Nagase T."/>
            <person name="Nomura N."/>
            <person name="Kikuchi H."/>
            <person name="Masuho Y."/>
            <person name="Yamashita R."/>
            <person name="Nakai K."/>
            <person name="Yada T."/>
            <person name="Nakamura Y."/>
            <person name="Ohara O."/>
            <person name="Isogai T."/>
            <person name="Sugano S."/>
        </authorList>
    </citation>
    <scope>NUCLEOTIDE SEQUENCE [LARGE SCALE MRNA] (ISOFORMS 1 AND 2)</scope>
    <source>
        <tissue>Placenta</tissue>
        <tissue>Synovium</tissue>
        <tissue>Tongue</tissue>
    </source>
</reference>
<reference key="3">
    <citation type="journal article" date="2004" name="Nature">
        <title>The sequence and analysis of duplication-rich human chromosome 16.</title>
        <authorList>
            <person name="Martin J."/>
            <person name="Han C."/>
            <person name="Gordon L.A."/>
            <person name="Terry A."/>
            <person name="Prabhakar S."/>
            <person name="She X."/>
            <person name="Xie G."/>
            <person name="Hellsten U."/>
            <person name="Chan Y.M."/>
            <person name="Altherr M."/>
            <person name="Couronne O."/>
            <person name="Aerts A."/>
            <person name="Bajorek E."/>
            <person name="Black S."/>
            <person name="Blumer H."/>
            <person name="Branscomb E."/>
            <person name="Brown N.C."/>
            <person name="Bruno W.J."/>
            <person name="Buckingham J.M."/>
            <person name="Callen D.F."/>
            <person name="Campbell C.S."/>
            <person name="Campbell M.L."/>
            <person name="Campbell E.W."/>
            <person name="Caoile C."/>
            <person name="Challacombe J.F."/>
            <person name="Chasteen L.A."/>
            <person name="Chertkov O."/>
            <person name="Chi H.C."/>
            <person name="Christensen M."/>
            <person name="Clark L.M."/>
            <person name="Cohn J.D."/>
            <person name="Denys M."/>
            <person name="Detter J.C."/>
            <person name="Dickson M."/>
            <person name="Dimitrijevic-Bussod M."/>
            <person name="Escobar J."/>
            <person name="Fawcett J.J."/>
            <person name="Flowers D."/>
            <person name="Fotopulos D."/>
            <person name="Glavina T."/>
            <person name="Gomez M."/>
            <person name="Gonzales E."/>
            <person name="Goodstein D."/>
            <person name="Goodwin L.A."/>
            <person name="Grady D.L."/>
            <person name="Grigoriev I."/>
            <person name="Groza M."/>
            <person name="Hammon N."/>
            <person name="Hawkins T."/>
            <person name="Haydu L."/>
            <person name="Hildebrand C.E."/>
            <person name="Huang W."/>
            <person name="Israni S."/>
            <person name="Jett J."/>
            <person name="Jewett P.B."/>
            <person name="Kadner K."/>
            <person name="Kimball H."/>
            <person name="Kobayashi A."/>
            <person name="Krawczyk M.-C."/>
            <person name="Leyba T."/>
            <person name="Longmire J.L."/>
            <person name="Lopez F."/>
            <person name="Lou Y."/>
            <person name="Lowry S."/>
            <person name="Ludeman T."/>
            <person name="Manohar C.F."/>
            <person name="Mark G.A."/>
            <person name="McMurray K.L."/>
            <person name="Meincke L.J."/>
            <person name="Morgan J."/>
            <person name="Moyzis R.K."/>
            <person name="Mundt M.O."/>
            <person name="Munk A.C."/>
            <person name="Nandkeshwar R.D."/>
            <person name="Pitluck S."/>
            <person name="Pollard M."/>
            <person name="Predki P."/>
            <person name="Parson-Quintana B."/>
            <person name="Ramirez L."/>
            <person name="Rash S."/>
            <person name="Retterer J."/>
            <person name="Ricke D.O."/>
            <person name="Robinson D.L."/>
            <person name="Rodriguez A."/>
            <person name="Salamov A."/>
            <person name="Saunders E.H."/>
            <person name="Scott D."/>
            <person name="Shough T."/>
            <person name="Stallings R.L."/>
            <person name="Stalvey M."/>
            <person name="Sutherland R.D."/>
            <person name="Tapia R."/>
            <person name="Tesmer J.G."/>
            <person name="Thayer N."/>
            <person name="Thompson L.S."/>
            <person name="Tice H."/>
            <person name="Torney D.C."/>
            <person name="Tran-Gyamfi M."/>
            <person name="Tsai M."/>
            <person name="Ulanovsky L.E."/>
            <person name="Ustaszewska A."/>
            <person name="Vo N."/>
            <person name="White P.S."/>
            <person name="Williams A.L."/>
            <person name="Wills P.L."/>
            <person name="Wu J.-R."/>
            <person name="Wu K."/>
            <person name="Yang J."/>
            <person name="DeJong P."/>
            <person name="Bruce D."/>
            <person name="Doggett N.A."/>
            <person name="Deaven L."/>
            <person name="Schmutz J."/>
            <person name="Grimwood J."/>
            <person name="Richardson P."/>
            <person name="Rokhsar D.S."/>
            <person name="Eichler E.E."/>
            <person name="Gilna P."/>
            <person name="Lucas S.M."/>
            <person name="Myers R.M."/>
            <person name="Rubin E.M."/>
            <person name="Pennacchio L.A."/>
        </authorList>
    </citation>
    <scope>NUCLEOTIDE SEQUENCE [LARGE SCALE GENOMIC DNA]</scope>
</reference>
<reference key="4">
    <citation type="journal article" date="2004" name="Genome Res.">
        <title>The status, quality, and expansion of the NIH full-length cDNA project: the Mammalian Gene Collection (MGC).</title>
        <authorList>
            <consortium name="The MGC Project Team"/>
        </authorList>
    </citation>
    <scope>NUCLEOTIDE SEQUENCE [LARGE SCALE MRNA] (ISOFORMS 1 AND 3)</scope>
</reference>
<dbReference type="EC" id="3.4.21.-"/>
<dbReference type="EMBL" id="AJ627034">
    <property type="protein sequence ID" value="CAF25303.1"/>
    <property type="molecule type" value="mRNA"/>
</dbReference>
<dbReference type="EMBL" id="AK075142">
    <property type="status" value="NOT_ANNOTATED_CDS"/>
    <property type="molecule type" value="mRNA"/>
</dbReference>
<dbReference type="EMBL" id="AK290310">
    <property type="protein sequence ID" value="BAF82999.1"/>
    <property type="molecule type" value="mRNA"/>
</dbReference>
<dbReference type="EMBL" id="AK301409">
    <property type="protein sequence ID" value="BAG62942.1"/>
    <property type="molecule type" value="mRNA"/>
</dbReference>
<dbReference type="EMBL" id="AC009088">
    <property type="status" value="NOT_ANNOTATED_CDS"/>
    <property type="molecule type" value="Genomic_DNA"/>
</dbReference>
<dbReference type="EMBL" id="BC137396">
    <property type="protein sequence ID" value="AAI37397.1"/>
    <property type="molecule type" value="mRNA"/>
</dbReference>
<dbReference type="EMBL" id="BC144615">
    <property type="protein sequence ID" value="AAI44616.1"/>
    <property type="molecule type" value="mRNA"/>
</dbReference>
<dbReference type="CCDS" id="CCDS32436.1">
    <molecule id="Q5K4E3-1"/>
</dbReference>
<dbReference type="CCDS" id="CCDS58452.1">
    <molecule id="Q5K4E3-2"/>
</dbReference>
<dbReference type="CCDS" id="CCDS58453.1">
    <molecule id="Q5K4E3-3"/>
</dbReference>
<dbReference type="RefSeq" id="NP_001245219.1">
    <molecule id="Q5K4E3-3"/>
    <property type="nucleotide sequence ID" value="NM_001258290.2"/>
</dbReference>
<dbReference type="RefSeq" id="NP_001245220.1">
    <molecule id="Q5K4E3-2"/>
    <property type="nucleotide sequence ID" value="NM_001258291.2"/>
</dbReference>
<dbReference type="RefSeq" id="NP_775773.2">
    <molecule id="Q5K4E3-1"/>
    <property type="nucleotide sequence ID" value="NM_173502.5"/>
</dbReference>
<dbReference type="SMR" id="Q5K4E3"/>
<dbReference type="FunCoup" id="Q5K4E3">
    <property type="interactions" value="406"/>
</dbReference>
<dbReference type="STRING" id="9606.ENSP00000268281"/>
<dbReference type="MEROPS" id="S01.414"/>
<dbReference type="MEROPS" id="S01.940"/>
<dbReference type="MEROPS" id="S01.941"/>
<dbReference type="GlyCosmos" id="Q5K4E3">
    <property type="glycosylation" value="9 sites, No reported glycans"/>
</dbReference>
<dbReference type="GlyGen" id="Q5K4E3">
    <property type="glycosylation" value="9 sites, 4 N-linked glycans (4 sites)"/>
</dbReference>
<dbReference type="BioMuta" id="PRSS36"/>
<dbReference type="DMDM" id="209572670"/>
<dbReference type="MassIVE" id="Q5K4E3"/>
<dbReference type="PaxDb" id="9606-ENSP00000268281"/>
<dbReference type="PeptideAtlas" id="Q5K4E3"/>
<dbReference type="Antibodypedia" id="27673">
    <property type="antibodies" value="61 antibodies from 16 providers"/>
</dbReference>
<dbReference type="DNASU" id="146547"/>
<dbReference type="Ensembl" id="ENST00000268281.9">
    <molecule id="Q5K4E3-1"/>
    <property type="protein sequence ID" value="ENSP00000268281.4"/>
    <property type="gene ID" value="ENSG00000178226.11"/>
</dbReference>
<dbReference type="Ensembl" id="ENST00000418068.6">
    <molecule id="Q5K4E3-2"/>
    <property type="protein sequence ID" value="ENSP00000407160.2"/>
    <property type="gene ID" value="ENSG00000178226.11"/>
</dbReference>
<dbReference type="Ensembl" id="ENST00000569305.1">
    <molecule id="Q5K4E3-3"/>
    <property type="protein sequence ID" value="ENSP00000454768.1"/>
    <property type="gene ID" value="ENSG00000178226.11"/>
</dbReference>
<dbReference type="GeneID" id="146547"/>
<dbReference type="KEGG" id="hsa:146547"/>
<dbReference type="MANE-Select" id="ENST00000268281.9">
    <property type="protein sequence ID" value="ENSP00000268281.4"/>
    <property type="RefSeq nucleotide sequence ID" value="NM_173502.5"/>
    <property type="RefSeq protein sequence ID" value="NP_775773.2"/>
</dbReference>
<dbReference type="UCSC" id="uc002ebd.5">
    <molecule id="Q5K4E3-1"/>
    <property type="organism name" value="human"/>
</dbReference>
<dbReference type="AGR" id="HGNC:26906"/>
<dbReference type="CTD" id="146547"/>
<dbReference type="DisGeNET" id="146547"/>
<dbReference type="GeneCards" id="PRSS36"/>
<dbReference type="HGNC" id="HGNC:26906">
    <property type="gene designation" value="PRSS36"/>
</dbReference>
<dbReference type="HPA" id="ENSG00000178226">
    <property type="expression patterns" value="Tissue enhanced (pituitary)"/>
</dbReference>
<dbReference type="MIM" id="610560">
    <property type="type" value="gene"/>
</dbReference>
<dbReference type="neXtProt" id="NX_Q5K4E3"/>
<dbReference type="OpenTargets" id="ENSG00000178226"/>
<dbReference type="PharmGKB" id="PA142671123"/>
<dbReference type="VEuPathDB" id="HostDB:ENSG00000178226"/>
<dbReference type="eggNOG" id="KOG3627">
    <property type="taxonomic scope" value="Eukaryota"/>
</dbReference>
<dbReference type="GeneTree" id="ENSGT00940000161761"/>
<dbReference type="HOGENOM" id="CLU_004497_2_2_1"/>
<dbReference type="InParanoid" id="Q5K4E3"/>
<dbReference type="OMA" id="HCLYQGV"/>
<dbReference type="OrthoDB" id="10002959at2759"/>
<dbReference type="PAN-GO" id="Q5K4E3">
    <property type="GO annotations" value="1 GO annotation based on evolutionary models"/>
</dbReference>
<dbReference type="PhylomeDB" id="Q5K4E3"/>
<dbReference type="TreeFam" id="TF351678"/>
<dbReference type="PathwayCommons" id="Q5K4E3"/>
<dbReference type="BioGRID-ORCS" id="146547">
    <property type="hits" value="12 hits in 1135 CRISPR screens"/>
</dbReference>
<dbReference type="GenomeRNAi" id="146547"/>
<dbReference type="Pharos" id="Q5K4E3">
    <property type="development level" value="Tbio"/>
</dbReference>
<dbReference type="PRO" id="PR:Q5K4E3"/>
<dbReference type="Proteomes" id="UP000005640">
    <property type="component" value="Chromosome 16"/>
</dbReference>
<dbReference type="RNAct" id="Q5K4E3">
    <property type="molecule type" value="protein"/>
</dbReference>
<dbReference type="Bgee" id="ENSG00000178226">
    <property type="expression patterns" value="Expressed in primordial germ cell in gonad and 95 other cell types or tissues"/>
</dbReference>
<dbReference type="ExpressionAtlas" id="Q5K4E3">
    <property type="expression patterns" value="baseline and differential"/>
</dbReference>
<dbReference type="GO" id="GO:0005737">
    <property type="term" value="C:cytoplasm"/>
    <property type="evidence" value="ECO:0000314"/>
    <property type="project" value="MGI"/>
</dbReference>
<dbReference type="GO" id="GO:0005576">
    <property type="term" value="C:extracellular region"/>
    <property type="evidence" value="ECO:0007669"/>
    <property type="project" value="UniProtKB-KW"/>
</dbReference>
<dbReference type="GO" id="GO:0004252">
    <property type="term" value="F:serine-type endopeptidase activity"/>
    <property type="evidence" value="ECO:0000314"/>
    <property type="project" value="MGI"/>
</dbReference>
<dbReference type="GO" id="GO:0006508">
    <property type="term" value="P:proteolysis"/>
    <property type="evidence" value="ECO:0007669"/>
    <property type="project" value="UniProtKB-KW"/>
</dbReference>
<dbReference type="CDD" id="cd00190">
    <property type="entry name" value="Tryp_SPc"/>
    <property type="match status" value="1"/>
</dbReference>
<dbReference type="FunFam" id="2.40.10.10:FF:000044">
    <property type="entry name" value="polyserase-2 isoform X1"/>
    <property type="match status" value="2"/>
</dbReference>
<dbReference type="FunFam" id="2.40.10.10:FF:000024">
    <property type="entry name" value="Serine protease 53"/>
    <property type="match status" value="1"/>
</dbReference>
<dbReference type="Gene3D" id="2.40.10.10">
    <property type="entry name" value="Trypsin-like serine proteases"/>
    <property type="match status" value="3"/>
</dbReference>
<dbReference type="InterPro" id="IPR017326">
    <property type="entry name" value="Pept_S1A_polyserase-2"/>
</dbReference>
<dbReference type="InterPro" id="IPR009003">
    <property type="entry name" value="Peptidase_S1_PA"/>
</dbReference>
<dbReference type="InterPro" id="IPR043504">
    <property type="entry name" value="Peptidase_S1_PA_chymotrypsin"/>
</dbReference>
<dbReference type="InterPro" id="IPR001314">
    <property type="entry name" value="Peptidase_S1A"/>
</dbReference>
<dbReference type="InterPro" id="IPR001254">
    <property type="entry name" value="Trypsin_dom"/>
</dbReference>
<dbReference type="InterPro" id="IPR018114">
    <property type="entry name" value="TRYPSIN_HIS"/>
</dbReference>
<dbReference type="InterPro" id="IPR033116">
    <property type="entry name" value="TRYPSIN_SER"/>
</dbReference>
<dbReference type="PANTHER" id="PTHR24253:SF100">
    <property type="entry name" value="POLYSERASE-2"/>
    <property type="match status" value="1"/>
</dbReference>
<dbReference type="PANTHER" id="PTHR24253">
    <property type="entry name" value="TRANSMEMBRANE PROTEASE SERINE"/>
    <property type="match status" value="1"/>
</dbReference>
<dbReference type="Pfam" id="PF00089">
    <property type="entry name" value="Trypsin"/>
    <property type="match status" value="3"/>
</dbReference>
<dbReference type="PIRSF" id="PIRSF037933">
    <property type="entry name" value="Polyserase-2"/>
    <property type="match status" value="1"/>
</dbReference>
<dbReference type="PRINTS" id="PR00722">
    <property type="entry name" value="CHYMOTRYPSIN"/>
</dbReference>
<dbReference type="SMART" id="SM00020">
    <property type="entry name" value="Tryp_SPc"/>
    <property type="match status" value="3"/>
</dbReference>
<dbReference type="SUPFAM" id="SSF50494">
    <property type="entry name" value="Trypsin-like serine proteases"/>
    <property type="match status" value="3"/>
</dbReference>
<dbReference type="PROSITE" id="PS50240">
    <property type="entry name" value="TRYPSIN_DOM"/>
    <property type="match status" value="3"/>
</dbReference>
<dbReference type="PROSITE" id="PS00134">
    <property type="entry name" value="TRYPSIN_HIS"/>
    <property type="match status" value="1"/>
</dbReference>
<dbReference type="PROSITE" id="PS00135">
    <property type="entry name" value="TRYPSIN_SER"/>
    <property type="match status" value="1"/>
</dbReference>